<comment type="function">
    <text evidence="1">F(1)F(0) ATP synthase produces ATP from ADP in the presence of a proton or sodium gradient. F-type ATPases consist of two structural domains, F(1) containing the extramembraneous catalytic core and F(0) containing the membrane proton channel, linked together by a central stalk and a peripheral stalk. During catalysis, ATP synthesis in the catalytic domain of F(1) is coupled via a rotary mechanism of the central stalk subunits to proton translocation.</text>
</comment>
<comment type="function">
    <text evidence="1">Key component of the F(0) channel; it plays a direct role in translocation across the membrane. A homomeric c-ring of between 10-14 subunits forms the central stalk rotor element with the F(1) delta and epsilon subunits.</text>
</comment>
<comment type="subunit">
    <text evidence="1">F-type ATPases have 2 components, F(1) - the catalytic core - and F(0) - the membrane proton channel. F(1) has five subunits: alpha(3), beta(3), gamma(1), delta(1), epsilon(1). F(0) has three main subunits: a(1), b(2) and c(10-14). The alpha and beta chains form an alternating ring which encloses part of the gamma chain. F(1) is attached to F(0) by a central stalk formed by the gamma and epsilon chains, while a peripheral stalk is formed by the delta and b chains.</text>
</comment>
<comment type="subcellular location">
    <subcellularLocation>
        <location evidence="1">Cell inner membrane</location>
        <topology evidence="1">Multi-pass membrane protein</topology>
    </subcellularLocation>
</comment>
<comment type="similarity">
    <text evidence="1">Belongs to the ATPase C chain family.</text>
</comment>
<comment type="sequence caution" evidence="2">
    <conflict type="erroneous initiation">
        <sequence resource="EMBL-CDS" id="AAL02564"/>
    </conflict>
</comment>
<proteinExistence type="inferred from homology"/>
<sequence length="74" mass="7704">MDMVSLKFIGTGLMAIGMYGAALGVSNIFSSLLSSIARNPSATENLQRMALIGAGLAEAMGLFSFVIAMLLIFS</sequence>
<dbReference type="EMBL" id="AE006914">
    <property type="protein sequence ID" value="AAL02564.1"/>
    <property type="status" value="ALT_INIT"/>
    <property type="molecule type" value="Genomic_DNA"/>
</dbReference>
<dbReference type="PIR" id="B97703">
    <property type="entry name" value="B97703"/>
</dbReference>
<dbReference type="RefSeq" id="WP_010976714.1">
    <property type="nucleotide sequence ID" value="NC_003103.1"/>
</dbReference>
<dbReference type="SMR" id="Q92JP1"/>
<dbReference type="GeneID" id="928635"/>
<dbReference type="KEGG" id="rco:RC0026"/>
<dbReference type="HOGENOM" id="CLU_148047_4_0_5"/>
<dbReference type="Proteomes" id="UP000000816">
    <property type="component" value="Chromosome"/>
</dbReference>
<dbReference type="GO" id="GO:0005886">
    <property type="term" value="C:plasma membrane"/>
    <property type="evidence" value="ECO:0007669"/>
    <property type="project" value="UniProtKB-SubCell"/>
</dbReference>
<dbReference type="GO" id="GO:0045259">
    <property type="term" value="C:proton-transporting ATP synthase complex"/>
    <property type="evidence" value="ECO:0007669"/>
    <property type="project" value="UniProtKB-KW"/>
</dbReference>
<dbReference type="GO" id="GO:0033177">
    <property type="term" value="C:proton-transporting two-sector ATPase complex, proton-transporting domain"/>
    <property type="evidence" value="ECO:0007669"/>
    <property type="project" value="InterPro"/>
</dbReference>
<dbReference type="GO" id="GO:0008289">
    <property type="term" value="F:lipid binding"/>
    <property type="evidence" value="ECO:0007669"/>
    <property type="project" value="UniProtKB-KW"/>
</dbReference>
<dbReference type="GO" id="GO:0046933">
    <property type="term" value="F:proton-transporting ATP synthase activity, rotational mechanism"/>
    <property type="evidence" value="ECO:0007669"/>
    <property type="project" value="UniProtKB-UniRule"/>
</dbReference>
<dbReference type="CDD" id="cd18182">
    <property type="entry name" value="ATP-synt_Fo_c_ATP5G3"/>
    <property type="match status" value="1"/>
</dbReference>
<dbReference type="Gene3D" id="1.20.20.10">
    <property type="entry name" value="F1F0 ATP synthase subunit C"/>
    <property type="match status" value="1"/>
</dbReference>
<dbReference type="HAMAP" id="MF_01396">
    <property type="entry name" value="ATP_synth_c_bact"/>
    <property type="match status" value="1"/>
</dbReference>
<dbReference type="InterPro" id="IPR000454">
    <property type="entry name" value="ATP_synth_F0_csu"/>
</dbReference>
<dbReference type="InterPro" id="IPR020537">
    <property type="entry name" value="ATP_synth_F0_csu_DDCD_BS"/>
</dbReference>
<dbReference type="InterPro" id="IPR038662">
    <property type="entry name" value="ATP_synth_F0_csu_sf"/>
</dbReference>
<dbReference type="InterPro" id="IPR002379">
    <property type="entry name" value="ATPase_proteolipid_c-like_dom"/>
</dbReference>
<dbReference type="InterPro" id="IPR035921">
    <property type="entry name" value="F/V-ATP_Csub_sf"/>
</dbReference>
<dbReference type="NCBIfam" id="NF005733">
    <property type="entry name" value="PRK07558.1"/>
    <property type="match status" value="1"/>
</dbReference>
<dbReference type="PANTHER" id="PTHR10031">
    <property type="entry name" value="ATP SYNTHASE LIPID-BINDING PROTEIN, MITOCHONDRIAL"/>
    <property type="match status" value="1"/>
</dbReference>
<dbReference type="PANTHER" id="PTHR10031:SF0">
    <property type="entry name" value="ATPASE PROTEIN 9"/>
    <property type="match status" value="1"/>
</dbReference>
<dbReference type="Pfam" id="PF00137">
    <property type="entry name" value="ATP-synt_C"/>
    <property type="match status" value="1"/>
</dbReference>
<dbReference type="PRINTS" id="PR00124">
    <property type="entry name" value="ATPASEC"/>
</dbReference>
<dbReference type="SUPFAM" id="SSF81333">
    <property type="entry name" value="F1F0 ATP synthase subunit C"/>
    <property type="match status" value="1"/>
</dbReference>
<dbReference type="PROSITE" id="PS00605">
    <property type="entry name" value="ATPASE_C"/>
    <property type="match status" value="1"/>
</dbReference>
<keyword id="KW-0066">ATP synthesis</keyword>
<keyword id="KW-0997">Cell inner membrane</keyword>
<keyword id="KW-1003">Cell membrane</keyword>
<keyword id="KW-0138">CF(0)</keyword>
<keyword id="KW-0375">Hydrogen ion transport</keyword>
<keyword id="KW-0406">Ion transport</keyword>
<keyword id="KW-0446">Lipid-binding</keyword>
<keyword id="KW-0472">Membrane</keyword>
<keyword id="KW-0812">Transmembrane</keyword>
<keyword id="KW-1133">Transmembrane helix</keyword>
<keyword id="KW-0813">Transport</keyword>
<protein>
    <recommendedName>
        <fullName evidence="1">ATP synthase subunit c</fullName>
    </recommendedName>
    <alternativeName>
        <fullName evidence="1">ATP synthase F(0) sector subunit c</fullName>
    </alternativeName>
    <alternativeName>
        <fullName evidence="1">F-type ATPase subunit c</fullName>
        <shortName evidence="1">F-ATPase subunit c</shortName>
    </alternativeName>
    <alternativeName>
        <fullName evidence="1">Lipid-binding protein</fullName>
    </alternativeName>
</protein>
<organism>
    <name type="scientific">Rickettsia conorii (strain ATCC VR-613 / Malish 7)</name>
    <dbReference type="NCBI Taxonomy" id="272944"/>
    <lineage>
        <taxon>Bacteria</taxon>
        <taxon>Pseudomonadati</taxon>
        <taxon>Pseudomonadota</taxon>
        <taxon>Alphaproteobacteria</taxon>
        <taxon>Rickettsiales</taxon>
        <taxon>Rickettsiaceae</taxon>
        <taxon>Rickettsieae</taxon>
        <taxon>Rickettsia</taxon>
        <taxon>spotted fever group</taxon>
    </lineage>
</organism>
<gene>
    <name evidence="1" type="primary">atpE</name>
    <name type="ordered locus">RC0026</name>
</gene>
<reference key="1">
    <citation type="journal article" date="2001" name="Science">
        <title>Mechanisms of evolution in Rickettsia conorii and R. prowazekii.</title>
        <authorList>
            <person name="Ogata H."/>
            <person name="Audic S."/>
            <person name="Renesto-Audiffren P."/>
            <person name="Fournier P.-E."/>
            <person name="Barbe V."/>
            <person name="Samson D."/>
            <person name="Roux V."/>
            <person name="Cossart P."/>
            <person name="Weissenbach J."/>
            <person name="Claverie J.-M."/>
            <person name="Raoult D."/>
        </authorList>
    </citation>
    <scope>NUCLEOTIDE SEQUENCE [LARGE SCALE GENOMIC DNA]</scope>
    <source>
        <strain>ATCC VR-613 / Malish 7</strain>
    </source>
</reference>
<name>ATPL_RICCN</name>
<accession>Q92JP1</accession>
<evidence type="ECO:0000255" key="1">
    <source>
        <dbReference type="HAMAP-Rule" id="MF_01396"/>
    </source>
</evidence>
<evidence type="ECO:0000305" key="2"/>
<feature type="chain" id="PRO_0000112160" description="ATP synthase subunit c">
    <location>
        <begin position="1"/>
        <end position="74"/>
    </location>
</feature>
<feature type="transmembrane region" description="Helical" evidence="1">
    <location>
        <begin position="8"/>
        <end position="28"/>
    </location>
</feature>
<feature type="transmembrane region" description="Helical" evidence="1">
    <location>
        <begin position="52"/>
        <end position="72"/>
    </location>
</feature>
<feature type="site" description="Reversibly protonated during proton transport" evidence="1">
    <location>
        <position position="58"/>
    </location>
</feature>